<gene>
    <name evidence="1" type="primary">pth</name>
    <name type="ordered locus">Wbm0093</name>
</gene>
<organism>
    <name type="scientific">Wolbachia sp. subsp. Brugia malayi (strain TRS)</name>
    <dbReference type="NCBI Taxonomy" id="292805"/>
    <lineage>
        <taxon>Bacteria</taxon>
        <taxon>Pseudomonadati</taxon>
        <taxon>Pseudomonadota</taxon>
        <taxon>Alphaproteobacteria</taxon>
        <taxon>Rickettsiales</taxon>
        <taxon>Anaplasmataceae</taxon>
        <taxon>Wolbachieae</taxon>
        <taxon>Wolbachia</taxon>
    </lineage>
</organism>
<dbReference type="EC" id="3.1.1.29" evidence="1"/>
<dbReference type="EMBL" id="AE017321">
    <property type="protein sequence ID" value="AAW70685.1"/>
    <property type="molecule type" value="Genomic_DNA"/>
</dbReference>
<dbReference type="RefSeq" id="WP_011256295.1">
    <property type="nucleotide sequence ID" value="NC_006833.1"/>
</dbReference>
<dbReference type="SMR" id="Q5GTI9"/>
<dbReference type="STRING" id="292805.Wbm0093"/>
<dbReference type="KEGG" id="wbm:Wbm0093"/>
<dbReference type="eggNOG" id="COG0193">
    <property type="taxonomic scope" value="Bacteria"/>
</dbReference>
<dbReference type="HOGENOM" id="CLU_062456_1_0_5"/>
<dbReference type="Proteomes" id="UP000000534">
    <property type="component" value="Chromosome"/>
</dbReference>
<dbReference type="GO" id="GO:0005737">
    <property type="term" value="C:cytoplasm"/>
    <property type="evidence" value="ECO:0007669"/>
    <property type="project" value="UniProtKB-SubCell"/>
</dbReference>
<dbReference type="GO" id="GO:0004045">
    <property type="term" value="F:peptidyl-tRNA hydrolase activity"/>
    <property type="evidence" value="ECO:0007669"/>
    <property type="project" value="UniProtKB-UniRule"/>
</dbReference>
<dbReference type="GO" id="GO:0000049">
    <property type="term" value="F:tRNA binding"/>
    <property type="evidence" value="ECO:0007669"/>
    <property type="project" value="UniProtKB-UniRule"/>
</dbReference>
<dbReference type="GO" id="GO:0006515">
    <property type="term" value="P:protein quality control for misfolded or incompletely synthesized proteins"/>
    <property type="evidence" value="ECO:0007669"/>
    <property type="project" value="UniProtKB-UniRule"/>
</dbReference>
<dbReference type="GO" id="GO:0072344">
    <property type="term" value="P:rescue of stalled ribosome"/>
    <property type="evidence" value="ECO:0007669"/>
    <property type="project" value="UniProtKB-UniRule"/>
</dbReference>
<dbReference type="CDD" id="cd00462">
    <property type="entry name" value="PTH"/>
    <property type="match status" value="1"/>
</dbReference>
<dbReference type="FunFam" id="3.40.50.1470:FF:000001">
    <property type="entry name" value="Peptidyl-tRNA hydrolase"/>
    <property type="match status" value="1"/>
</dbReference>
<dbReference type="Gene3D" id="3.40.50.1470">
    <property type="entry name" value="Peptidyl-tRNA hydrolase"/>
    <property type="match status" value="1"/>
</dbReference>
<dbReference type="HAMAP" id="MF_00083">
    <property type="entry name" value="Pept_tRNA_hydro_bact"/>
    <property type="match status" value="1"/>
</dbReference>
<dbReference type="InterPro" id="IPR001328">
    <property type="entry name" value="Pept_tRNA_hydro"/>
</dbReference>
<dbReference type="InterPro" id="IPR018171">
    <property type="entry name" value="Pept_tRNA_hydro_CS"/>
</dbReference>
<dbReference type="InterPro" id="IPR036416">
    <property type="entry name" value="Pept_tRNA_hydro_sf"/>
</dbReference>
<dbReference type="NCBIfam" id="TIGR00447">
    <property type="entry name" value="pth"/>
    <property type="match status" value="1"/>
</dbReference>
<dbReference type="PANTHER" id="PTHR17224">
    <property type="entry name" value="PEPTIDYL-TRNA HYDROLASE"/>
    <property type="match status" value="1"/>
</dbReference>
<dbReference type="PANTHER" id="PTHR17224:SF1">
    <property type="entry name" value="PEPTIDYL-TRNA HYDROLASE"/>
    <property type="match status" value="1"/>
</dbReference>
<dbReference type="Pfam" id="PF01195">
    <property type="entry name" value="Pept_tRNA_hydro"/>
    <property type="match status" value="1"/>
</dbReference>
<dbReference type="SUPFAM" id="SSF53178">
    <property type="entry name" value="Peptidyl-tRNA hydrolase-like"/>
    <property type="match status" value="1"/>
</dbReference>
<dbReference type="PROSITE" id="PS01196">
    <property type="entry name" value="PEPT_TRNA_HYDROL_2"/>
    <property type="match status" value="1"/>
</dbReference>
<protein>
    <recommendedName>
        <fullName evidence="1">Peptidyl-tRNA hydrolase</fullName>
        <shortName evidence="1">Pth</shortName>
        <ecNumber evidence="1">3.1.1.29</ecNumber>
    </recommendedName>
</protein>
<reference key="1">
    <citation type="journal article" date="2005" name="PLoS Biol.">
        <title>The Wolbachia genome of Brugia malayi: endosymbiont evolution within a human pathogenic nematode.</title>
        <authorList>
            <person name="Foster J."/>
            <person name="Ganatra M."/>
            <person name="Kamal I."/>
            <person name="Ware J."/>
            <person name="Makarova K."/>
            <person name="Ivanova N."/>
            <person name="Bhattacharyya A."/>
            <person name="Kapatral V."/>
            <person name="Kumar S."/>
            <person name="Posfai J."/>
            <person name="Vincze T."/>
            <person name="Ingram J."/>
            <person name="Moran L."/>
            <person name="Lapidus A."/>
            <person name="Omelchenko M."/>
            <person name="Kyrpides N."/>
            <person name="Ghedin E."/>
            <person name="Wang S."/>
            <person name="Goltsman E."/>
            <person name="Joukov V."/>
            <person name="Ostrovskaya O."/>
            <person name="Tsukerman K."/>
            <person name="Mazur M."/>
            <person name="Comb D."/>
            <person name="Koonin E."/>
            <person name="Slatko B."/>
        </authorList>
    </citation>
    <scope>NUCLEOTIDE SEQUENCE [LARGE SCALE GENOMIC DNA]</scope>
    <source>
        <strain>TRS</strain>
    </source>
</reference>
<sequence>MHLIVGLGNPGSQYELTYHNIGFIIVDAICKHWNFQSFSKKADCLITSSVINDNKIMLMKPYSFMNNSGIPVARIRNFYKFSLDNVIVIHDDADLEPGRIKIKKGGGSAGHNGLKSIDSSIGNDYWRLRFGIGRSDSQRSLADYVLSKFSNLDDVIPLVERIAQNIHLMLQGNNIAFTNSIV</sequence>
<name>PTH_WOLTR</name>
<comment type="function">
    <text evidence="1">Hydrolyzes ribosome-free peptidyl-tRNAs (with 1 or more amino acids incorporated), which drop off the ribosome during protein synthesis, or as a result of ribosome stalling.</text>
</comment>
<comment type="function">
    <text evidence="1">Catalyzes the release of premature peptidyl moieties from peptidyl-tRNA molecules trapped in stalled 50S ribosomal subunits, and thus maintains levels of free tRNAs and 50S ribosomes.</text>
</comment>
<comment type="catalytic activity">
    <reaction evidence="1">
        <text>an N-acyl-L-alpha-aminoacyl-tRNA + H2O = an N-acyl-L-amino acid + a tRNA + H(+)</text>
        <dbReference type="Rhea" id="RHEA:54448"/>
        <dbReference type="Rhea" id="RHEA-COMP:10123"/>
        <dbReference type="Rhea" id="RHEA-COMP:13883"/>
        <dbReference type="ChEBI" id="CHEBI:15377"/>
        <dbReference type="ChEBI" id="CHEBI:15378"/>
        <dbReference type="ChEBI" id="CHEBI:59874"/>
        <dbReference type="ChEBI" id="CHEBI:78442"/>
        <dbReference type="ChEBI" id="CHEBI:138191"/>
        <dbReference type="EC" id="3.1.1.29"/>
    </reaction>
</comment>
<comment type="subunit">
    <text evidence="1">Monomer.</text>
</comment>
<comment type="subcellular location">
    <subcellularLocation>
        <location evidence="1">Cytoplasm</location>
    </subcellularLocation>
</comment>
<comment type="similarity">
    <text evidence="1">Belongs to the PTH family.</text>
</comment>
<keyword id="KW-0963">Cytoplasm</keyword>
<keyword id="KW-0378">Hydrolase</keyword>
<keyword id="KW-1185">Reference proteome</keyword>
<keyword id="KW-0694">RNA-binding</keyword>
<keyword id="KW-0820">tRNA-binding</keyword>
<proteinExistence type="inferred from homology"/>
<accession>Q5GTI9</accession>
<feature type="chain" id="PRO_0000187857" description="Peptidyl-tRNA hydrolase">
    <location>
        <begin position="1"/>
        <end position="182"/>
    </location>
</feature>
<feature type="active site" description="Proton acceptor" evidence="1">
    <location>
        <position position="19"/>
    </location>
</feature>
<feature type="binding site" evidence="1">
    <location>
        <position position="14"/>
    </location>
    <ligand>
        <name>tRNA</name>
        <dbReference type="ChEBI" id="CHEBI:17843"/>
    </ligand>
</feature>
<feature type="binding site" evidence="1">
    <location>
        <position position="64"/>
    </location>
    <ligand>
        <name>tRNA</name>
        <dbReference type="ChEBI" id="CHEBI:17843"/>
    </ligand>
</feature>
<feature type="binding site" evidence="1">
    <location>
        <position position="66"/>
    </location>
    <ligand>
        <name>tRNA</name>
        <dbReference type="ChEBI" id="CHEBI:17843"/>
    </ligand>
</feature>
<feature type="binding site" evidence="1">
    <location>
        <position position="112"/>
    </location>
    <ligand>
        <name>tRNA</name>
        <dbReference type="ChEBI" id="CHEBI:17843"/>
    </ligand>
</feature>
<feature type="site" description="Discriminates between blocked and unblocked aminoacyl-tRNA" evidence="1">
    <location>
        <position position="9"/>
    </location>
</feature>
<feature type="site" description="Stabilizes the basic form of H active site to accept a proton" evidence="1">
    <location>
        <position position="91"/>
    </location>
</feature>
<evidence type="ECO:0000255" key="1">
    <source>
        <dbReference type="HAMAP-Rule" id="MF_00083"/>
    </source>
</evidence>